<proteinExistence type="inferred from homology"/>
<dbReference type="EMBL" id="CM000127">
    <property type="protein sequence ID" value="EAY85639.1"/>
    <property type="molecule type" value="Genomic_DNA"/>
</dbReference>
<dbReference type="SMR" id="A2X479"/>
<dbReference type="STRING" id="39946.A2X479"/>
<dbReference type="EnsemblPlants" id="BGIOSGA008103-TA">
    <property type="protein sequence ID" value="BGIOSGA008103-PA"/>
    <property type="gene ID" value="BGIOSGA008103"/>
</dbReference>
<dbReference type="Gramene" id="BGIOSGA008103-TA">
    <property type="protein sequence ID" value="BGIOSGA008103-PA"/>
    <property type="gene ID" value="BGIOSGA008103"/>
</dbReference>
<dbReference type="HOGENOM" id="CLU_106037_0_0_1"/>
<dbReference type="OMA" id="NLPIMVC"/>
<dbReference type="Proteomes" id="UP000007015">
    <property type="component" value="Chromosome 2"/>
</dbReference>
<dbReference type="GO" id="GO:0005829">
    <property type="term" value="C:cytosol"/>
    <property type="evidence" value="ECO:0000250"/>
    <property type="project" value="UniProtKB"/>
</dbReference>
<dbReference type="GO" id="GO:0005634">
    <property type="term" value="C:nucleus"/>
    <property type="evidence" value="ECO:0007669"/>
    <property type="project" value="UniProtKB-SubCell"/>
</dbReference>
<dbReference type="GO" id="GO:0005886">
    <property type="term" value="C:plasma membrane"/>
    <property type="evidence" value="ECO:0007669"/>
    <property type="project" value="UniProtKB-SubCell"/>
</dbReference>
<dbReference type="GO" id="GO:0005096">
    <property type="term" value="F:GTPase activator activity"/>
    <property type="evidence" value="ECO:0000250"/>
    <property type="project" value="UniProtKB"/>
</dbReference>
<dbReference type="GO" id="GO:0008289">
    <property type="term" value="F:lipid binding"/>
    <property type="evidence" value="ECO:0007669"/>
    <property type="project" value="UniProtKB-KW"/>
</dbReference>
<dbReference type="GO" id="GO:0046872">
    <property type="term" value="F:metal ion binding"/>
    <property type="evidence" value="ECO:0007669"/>
    <property type="project" value="UniProtKB-KW"/>
</dbReference>
<dbReference type="GO" id="GO:0009738">
    <property type="term" value="P:abscisic acid-activated signaling pathway"/>
    <property type="evidence" value="ECO:0007669"/>
    <property type="project" value="UniProtKB-KW"/>
</dbReference>
<dbReference type="GO" id="GO:1900426">
    <property type="term" value="P:positive regulation of defense response to bacterium"/>
    <property type="evidence" value="ECO:0007669"/>
    <property type="project" value="EnsemblPlants"/>
</dbReference>
<dbReference type="GO" id="GO:0043547">
    <property type="term" value="P:positive regulation of GTPase activity"/>
    <property type="evidence" value="ECO:0000250"/>
    <property type="project" value="UniProtKB"/>
</dbReference>
<dbReference type="GO" id="GO:1901002">
    <property type="term" value="P:positive regulation of response to salt stress"/>
    <property type="evidence" value="ECO:0000250"/>
    <property type="project" value="UniProtKB"/>
</dbReference>
<dbReference type="GO" id="GO:0009651">
    <property type="term" value="P:response to salt stress"/>
    <property type="evidence" value="ECO:0000250"/>
    <property type="project" value="UniProtKB"/>
</dbReference>
<dbReference type="GO" id="GO:0009611">
    <property type="term" value="P:response to wounding"/>
    <property type="evidence" value="ECO:0007669"/>
    <property type="project" value="EnsemblPlants"/>
</dbReference>
<dbReference type="CDD" id="cd04038">
    <property type="entry name" value="C2_ArfGAP"/>
    <property type="match status" value="1"/>
</dbReference>
<dbReference type="Gene3D" id="2.60.40.150">
    <property type="entry name" value="C2 domain"/>
    <property type="match status" value="1"/>
</dbReference>
<dbReference type="InterPro" id="IPR000008">
    <property type="entry name" value="C2_dom"/>
</dbReference>
<dbReference type="InterPro" id="IPR035892">
    <property type="entry name" value="C2_domain_sf"/>
</dbReference>
<dbReference type="InterPro" id="IPR044562">
    <property type="entry name" value="CAR1-11"/>
</dbReference>
<dbReference type="PANTHER" id="PTHR45933">
    <property type="entry name" value="PROTEIN C2-DOMAIN ABA-RELATED 4"/>
    <property type="match status" value="1"/>
</dbReference>
<dbReference type="PANTHER" id="PTHR45933:SF5">
    <property type="entry name" value="PROTEIN C2-DOMAIN ABA-RELATED 4"/>
    <property type="match status" value="1"/>
</dbReference>
<dbReference type="Pfam" id="PF00168">
    <property type="entry name" value="C2"/>
    <property type="match status" value="1"/>
</dbReference>
<dbReference type="SMART" id="SM00239">
    <property type="entry name" value="C2"/>
    <property type="match status" value="1"/>
</dbReference>
<dbReference type="SUPFAM" id="SSF49562">
    <property type="entry name" value="C2 domain (Calcium/lipid-binding domain, CaLB)"/>
    <property type="match status" value="1"/>
</dbReference>
<dbReference type="PROSITE" id="PS50004">
    <property type="entry name" value="C2"/>
    <property type="match status" value="1"/>
</dbReference>
<gene>
    <name evidence="5" type="ORF">OsI_07012</name>
</gene>
<reference key="1">
    <citation type="journal article" date="2005" name="PLoS Biol.">
        <title>The genomes of Oryza sativa: a history of duplications.</title>
        <authorList>
            <person name="Yu J."/>
            <person name="Wang J."/>
            <person name="Lin W."/>
            <person name="Li S."/>
            <person name="Li H."/>
            <person name="Zhou J."/>
            <person name="Ni P."/>
            <person name="Dong W."/>
            <person name="Hu S."/>
            <person name="Zeng C."/>
            <person name="Zhang J."/>
            <person name="Zhang Y."/>
            <person name="Li R."/>
            <person name="Xu Z."/>
            <person name="Li S."/>
            <person name="Li X."/>
            <person name="Zheng H."/>
            <person name="Cong L."/>
            <person name="Lin L."/>
            <person name="Yin J."/>
            <person name="Geng J."/>
            <person name="Li G."/>
            <person name="Shi J."/>
            <person name="Liu J."/>
            <person name="Lv H."/>
            <person name="Li J."/>
            <person name="Wang J."/>
            <person name="Deng Y."/>
            <person name="Ran L."/>
            <person name="Shi X."/>
            <person name="Wang X."/>
            <person name="Wu Q."/>
            <person name="Li C."/>
            <person name="Ren X."/>
            <person name="Wang J."/>
            <person name="Wang X."/>
            <person name="Li D."/>
            <person name="Liu D."/>
            <person name="Zhang X."/>
            <person name="Ji Z."/>
            <person name="Zhao W."/>
            <person name="Sun Y."/>
            <person name="Zhang Z."/>
            <person name="Bao J."/>
            <person name="Han Y."/>
            <person name="Dong L."/>
            <person name="Ji J."/>
            <person name="Chen P."/>
            <person name="Wu S."/>
            <person name="Liu J."/>
            <person name="Xiao Y."/>
            <person name="Bu D."/>
            <person name="Tan J."/>
            <person name="Yang L."/>
            <person name="Ye C."/>
            <person name="Zhang J."/>
            <person name="Xu J."/>
            <person name="Zhou Y."/>
            <person name="Yu Y."/>
            <person name="Zhang B."/>
            <person name="Zhuang S."/>
            <person name="Wei H."/>
            <person name="Liu B."/>
            <person name="Lei M."/>
            <person name="Yu H."/>
            <person name="Li Y."/>
            <person name="Xu H."/>
            <person name="Wei S."/>
            <person name="He X."/>
            <person name="Fang L."/>
            <person name="Zhang Z."/>
            <person name="Zhang Y."/>
            <person name="Huang X."/>
            <person name="Su Z."/>
            <person name="Tong W."/>
            <person name="Li J."/>
            <person name="Tong Z."/>
            <person name="Li S."/>
            <person name="Ye J."/>
            <person name="Wang L."/>
            <person name="Fang L."/>
            <person name="Lei T."/>
            <person name="Chen C.-S."/>
            <person name="Chen H.-C."/>
            <person name="Xu Z."/>
            <person name="Li H."/>
            <person name="Huang H."/>
            <person name="Zhang F."/>
            <person name="Xu H."/>
            <person name="Li N."/>
            <person name="Zhao C."/>
            <person name="Li S."/>
            <person name="Dong L."/>
            <person name="Huang Y."/>
            <person name="Li L."/>
            <person name="Xi Y."/>
            <person name="Qi Q."/>
            <person name="Li W."/>
            <person name="Zhang B."/>
            <person name="Hu W."/>
            <person name="Zhang Y."/>
            <person name="Tian X."/>
            <person name="Jiao Y."/>
            <person name="Liang X."/>
            <person name="Jin J."/>
            <person name="Gao L."/>
            <person name="Zheng W."/>
            <person name="Hao B."/>
            <person name="Liu S.-M."/>
            <person name="Wang W."/>
            <person name="Yuan L."/>
            <person name="Cao M."/>
            <person name="McDermott J."/>
            <person name="Samudrala R."/>
            <person name="Wang J."/>
            <person name="Wong G.K.-S."/>
            <person name="Yang H."/>
        </authorList>
    </citation>
    <scope>NUCLEOTIDE SEQUENCE [LARGE SCALE GENOMIC DNA]</scope>
    <source>
        <strain>cv. 93-11</strain>
    </source>
</reference>
<name>GAP1_ORYSI</name>
<sequence>MLGHLVGLVKVRVVRGVNLAVRDLRSSDPYVIVRMGKQKLKTRVIKKTTNPEWNDELTLSIEDPAVPVRLEVYDKDTFIDDAMGNAELDIRPLVEVVKMKIEGVADNTVVKKVVPNRQNCLAEESTIYISEGKVKQDVVLRLRDVECGEIELQLQWVDIPGSKGV</sequence>
<keyword id="KW-0938">Abscisic acid signaling pathway</keyword>
<keyword id="KW-0106">Calcium</keyword>
<keyword id="KW-1003">Cell membrane</keyword>
<keyword id="KW-0963">Cytoplasm</keyword>
<keyword id="KW-0343">GTPase activation</keyword>
<keyword id="KW-0446">Lipid-binding</keyword>
<keyword id="KW-0472">Membrane</keyword>
<keyword id="KW-0479">Metal-binding</keyword>
<keyword id="KW-0539">Nucleus</keyword>
<keyword id="KW-1185">Reference proteome</keyword>
<comment type="function">
    <text evidence="1 2">Mediates the transient calcium-dependent interaction of PYR/PYL/RCAR abscisic acid (ABA) receptors with the plasma membrane and thus regulates ABA sensitivity (By similarity). Stimulates the GTPase/ATPase activities of YchF1, and regulates its subcellular localization. Promotes tolerance towards salinity stress by limiting the accumulation of reactive oxygen species (ROS). Promotes resistance to bacterial pathogens (By similarity).</text>
</comment>
<comment type="subunit">
    <text evidence="1 2">Binds to PYR/PYL/RCAR abscisic acid intracellular receptors in an ABA-independent manner, both at the plasma membrane and in the nucleus. Binds phospholipids in a Ca(2+)-dependent manner (By similarity). Interacts with YchF1 (By similarity).</text>
</comment>
<comment type="subcellular location">
    <subcellularLocation>
        <location evidence="2">Cell membrane</location>
    </subcellularLocation>
    <subcellularLocation>
        <location evidence="2">Nucleus</location>
    </subcellularLocation>
    <subcellularLocation>
        <location evidence="1">Cytoplasm</location>
        <location evidence="1">Cytosol</location>
    </subcellularLocation>
    <text evidence="1">Localized mainly in the cytosol under NaCl treatment, but translocates to the plasma membrane upon wounding.</text>
</comment>
<comment type="similarity">
    <text evidence="4">Belongs to the plant CAR protein family.</text>
</comment>
<protein>
    <recommendedName>
        <fullName evidence="4">GTPase activating protein 1</fullName>
        <shortName evidence="4">OsGAP1</shortName>
    </recommendedName>
    <alternativeName>
        <fullName evidence="4">G-protein binding protein 1</fullName>
        <shortName evidence="4">OsGPBP1</shortName>
    </alternativeName>
</protein>
<evidence type="ECO:0000250" key="1">
    <source>
        <dbReference type="UniProtKB" id="Q6YWF1"/>
    </source>
</evidence>
<evidence type="ECO:0000250" key="2">
    <source>
        <dbReference type="UniProtKB" id="Q9LVH4"/>
    </source>
</evidence>
<evidence type="ECO:0000255" key="3">
    <source>
        <dbReference type="PROSITE-ProRule" id="PRU00041"/>
    </source>
</evidence>
<evidence type="ECO:0000305" key="4"/>
<evidence type="ECO:0000312" key="5">
    <source>
        <dbReference type="EMBL" id="EAY85639.1"/>
    </source>
</evidence>
<evidence type="ECO:0000312" key="6">
    <source>
        <dbReference type="Proteomes" id="UP000007015"/>
    </source>
</evidence>
<organism evidence="6">
    <name type="scientific">Oryza sativa subsp. indica</name>
    <name type="common">Rice</name>
    <dbReference type="NCBI Taxonomy" id="39946"/>
    <lineage>
        <taxon>Eukaryota</taxon>
        <taxon>Viridiplantae</taxon>
        <taxon>Streptophyta</taxon>
        <taxon>Embryophyta</taxon>
        <taxon>Tracheophyta</taxon>
        <taxon>Spermatophyta</taxon>
        <taxon>Magnoliopsida</taxon>
        <taxon>Liliopsida</taxon>
        <taxon>Poales</taxon>
        <taxon>Poaceae</taxon>
        <taxon>BOP clade</taxon>
        <taxon>Oryzoideae</taxon>
        <taxon>Oryzeae</taxon>
        <taxon>Oryzinae</taxon>
        <taxon>Oryza</taxon>
        <taxon>Oryza sativa</taxon>
    </lineage>
</organism>
<accession>A2X479</accession>
<feature type="chain" id="PRO_0000433310" description="GTPase activating protein 1">
    <location>
        <begin position="1"/>
        <end position="165"/>
    </location>
</feature>
<feature type="domain" description="C2" evidence="3">
    <location>
        <begin position="1"/>
        <end position="105"/>
    </location>
</feature>
<feature type="binding site" evidence="2">
    <location>
        <position position="22"/>
    </location>
    <ligand>
        <name>Ca(2+)</name>
        <dbReference type="ChEBI" id="CHEBI:29108"/>
        <label>1</label>
    </ligand>
</feature>
<feature type="binding site" evidence="2">
    <location>
        <position position="23"/>
    </location>
    <ligand>
        <name>Ca(2+)</name>
        <dbReference type="ChEBI" id="CHEBI:29108"/>
        <label>1</label>
    </ligand>
</feature>
<feature type="binding site" evidence="2">
    <location>
        <position position="23"/>
    </location>
    <ligand>
        <name>Ca(2+)</name>
        <dbReference type="ChEBI" id="CHEBI:29108"/>
        <label>2</label>
    </ligand>
</feature>
<feature type="binding site" evidence="2">
    <location>
        <position position="28"/>
    </location>
    <ligand>
        <name>Ca(2+)</name>
        <dbReference type="ChEBI" id="CHEBI:29108"/>
        <label>2</label>
    </ligand>
</feature>
<feature type="binding site" evidence="2">
    <location>
        <position position="74"/>
    </location>
    <ligand>
        <name>Ca(2+)</name>
        <dbReference type="ChEBI" id="CHEBI:29108"/>
        <label>1</label>
    </ligand>
</feature>
<feature type="binding site" evidence="2">
    <location>
        <position position="74"/>
    </location>
    <ligand>
        <name>Ca(2+)</name>
        <dbReference type="ChEBI" id="CHEBI:29108"/>
        <label>2</label>
    </ligand>
</feature>
<feature type="binding site" evidence="2">
    <location>
        <position position="75"/>
    </location>
    <ligand>
        <name>Ca(2+)</name>
        <dbReference type="ChEBI" id="CHEBI:29108"/>
        <label>2</label>
    </ligand>
</feature>
<feature type="binding site" evidence="2">
    <location>
        <position position="76"/>
    </location>
    <ligand>
        <name>Ca(2+)</name>
        <dbReference type="ChEBI" id="CHEBI:29108"/>
        <label>1</label>
    </ligand>
</feature>
<feature type="binding site" evidence="2">
    <location>
        <position position="76"/>
    </location>
    <ligand>
        <name>Ca(2+)</name>
        <dbReference type="ChEBI" id="CHEBI:29108"/>
        <label>2</label>
    </ligand>
</feature>
<feature type="binding site" evidence="2">
    <location>
        <position position="81"/>
    </location>
    <ligand>
        <name>Ca(2+)</name>
        <dbReference type="ChEBI" id="CHEBI:29108"/>
        <label>1</label>
    </ligand>
</feature>